<proteinExistence type="evidence at transcript level"/>
<feature type="transit peptide" description="Chloroplast" evidence="2">
    <location>
        <begin position="1"/>
        <end position="28"/>
    </location>
</feature>
<feature type="chain" id="PRO_0000413433" description="Protein LHCP TRANSLOCATION DEFECT">
    <location>
        <begin position="29"/>
        <end position="172"/>
    </location>
</feature>
<feature type="repeat" description="ANK">
    <location>
        <begin position="114"/>
        <end position="146"/>
    </location>
</feature>
<sequence>MASIPCTFQLSARASSASAAAAARRSPRAAARLGWLRPSRLSAVVPASESGRVGPTCFFKFGNKDAEGAGIYGSQGRDDFDRDDVEQYFNYMGMLAVEGTYDKMEALLNQDIHPVDILLMLAASEGDKPKLEELLRAGAKYDVKDVDGRTALDRAADDTREFILGFAATLAA</sequence>
<protein>
    <recommendedName>
        <fullName>Protein LHCP TRANSLOCATION DEFECT</fullName>
    </recommendedName>
</protein>
<organism>
    <name type="scientific">Oryza sativa subsp. japonica</name>
    <name type="common">Rice</name>
    <dbReference type="NCBI Taxonomy" id="39947"/>
    <lineage>
        <taxon>Eukaryota</taxon>
        <taxon>Viridiplantae</taxon>
        <taxon>Streptophyta</taxon>
        <taxon>Embryophyta</taxon>
        <taxon>Tracheophyta</taxon>
        <taxon>Spermatophyta</taxon>
        <taxon>Magnoliopsida</taxon>
        <taxon>Liliopsida</taxon>
        <taxon>Poales</taxon>
        <taxon>Poaceae</taxon>
        <taxon>BOP clade</taxon>
        <taxon>Oryzoideae</taxon>
        <taxon>Oryzeae</taxon>
        <taxon>Oryzinae</taxon>
        <taxon>Oryza</taxon>
        <taxon>Oryza sativa</taxon>
    </lineage>
</organism>
<keyword id="KW-0040">ANK repeat</keyword>
<keyword id="KW-0150">Chloroplast</keyword>
<keyword id="KW-0934">Plastid</keyword>
<keyword id="KW-0653">Protein transport</keyword>
<keyword id="KW-1185">Reference proteome</keyword>
<keyword id="KW-0809">Transit peptide</keyword>
<keyword id="KW-0813">Transport</keyword>
<gene>
    <name type="primary">LTD</name>
    <name type="ordered locus">Os07g0520800</name>
    <name type="ordered locus">LOC_Os07g33660</name>
    <name type="ORF">OJ1657_A07.104</name>
    <name type="ORF">OJ1793_E11.12</name>
    <name type="ORF">OsJ_24479</name>
</gene>
<name>LTD_ORYSJ</name>
<accession>A3BKF2</accession>
<accession>Q0D605</accession>
<accession>Q7XIL2</accession>
<dbReference type="EMBL" id="AP003850">
    <property type="protein sequence ID" value="BAC79654.1"/>
    <property type="status" value="ALT_SEQ"/>
    <property type="molecule type" value="Genomic_DNA"/>
</dbReference>
<dbReference type="EMBL" id="AP003930">
    <property type="protein sequence ID" value="BAD30420.1"/>
    <property type="status" value="ALT_SEQ"/>
    <property type="molecule type" value="Genomic_DNA"/>
</dbReference>
<dbReference type="EMBL" id="AP008213">
    <property type="protein sequence ID" value="BAF21718.2"/>
    <property type="status" value="ALT_SEQ"/>
    <property type="molecule type" value="Genomic_DNA"/>
</dbReference>
<dbReference type="EMBL" id="AP014963">
    <property type="status" value="NOT_ANNOTATED_CDS"/>
    <property type="molecule type" value="Genomic_DNA"/>
</dbReference>
<dbReference type="EMBL" id="CM000144">
    <property type="protein sequence ID" value="EAZ40041.1"/>
    <property type="molecule type" value="Genomic_DNA"/>
</dbReference>
<dbReference type="EMBL" id="AK062845">
    <property type="status" value="NOT_ANNOTATED_CDS"/>
    <property type="molecule type" value="mRNA"/>
</dbReference>
<dbReference type="RefSeq" id="XP_015647220.1">
    <property type="nucleotide sequence ID" value="XM_015791734.1"/>
</dbReference>
<dbReference type="SMR" id="A3BKF2"/>
<dbReference type="FunCoup" id="A3BKF2">
    <property type="interactions" value="1184"/>
</dbReference>
<dbReference type="STRING" id="39947.A3BKF2"/>
<dbReference type="PaxDb" id="39947-A3BKF2"/>
<dbReference type="KEGG" id="dosa:Os07g0520800"/>
<dbReference type="eggNOG" id="ENOG502RYRG">
    <property type="taxonomic scope" value="Eukaryota"/>
</dbReference>
<dbReference type="HOGENOM" id="CLU_132294_0_0_1"/>
<dbReference type="InParanoid" id="A3BKF2"/>
<dbReference type="OrthoDB" id="539213at2759"/>
<dbReference type="Proteomes" id="UP000000763">
    <property type="component" value="Chromosome 7"/>
</dbReference>
<dbReference type="Proteomes" id="UP000007752">
    <property type="component" value="Chromosome 7"/>
</dbReference>
<dbReference type="Proteomes" id="UP000059680">
    <property type="component" value="Chromosome 7"/>
</dbReference>
<dbReference type="GO" id="GO:0009941">
    <property type="term" value="C:chloroplast envelope"/>
    <property type="evidence" value="ECO:0000318"/>
    <property type="project" value="GO_Central"/>
</dbReference>
<dbReference type="GO" id="GO:0009570">
    <property type="term" value="C:chloroplast stroma"/>
    <property type="evidence" value="ECO:0000318"/>
    <property type="project" value="GO_Central"/>
</dbReference>
<dbReference type="GO" id="GO:0090391">
    <property type="term" value="P:granum assembly"/>
    <property type="evidence" value="ECO:0000318"/>
    <property type="project" value="GO_Central"/>
</dbReference>
<dbReference type="GO" id="GO:0006886">
    <property type="term" value="P:intracellular protein transport"/>
    <property type="evidence" value="ECO:0000318"/>
    <property type="project" value="GO_Central"/>
</dbReference>
<dbReference type="FunFam" id="1.25.40.20:FF:000251">
    <property type="entry name" value="Protein LHCP TRANSLOCATION DEFECT"/>
    <property type="match status" value="1"/>
</dbReference>
<dbReference type="Gene3D" id="1.25.40.20">
    <property type="entry name" value="Ankyrin repeat-containing domain"/>
    <property type="match status" value="1"/>
</dbReference>
<dbReference type="InterPro" id="IPR036770">
    <property type="entry name" value="Ankyrin_rpt-contain_sf"/>
</dbReference>
<dbReference type="InterPro" id="IPR044242">
    <property type="entry name" value="LTD-like"/>
</dbReference>
<dbReference type="PANTHER" id="PTHR47317">
    <property type="entry name" value="PROTEIN LHCP TRANSLOCATION DEFECT"/>
    <property type="match status" value="1"/>
</dbReference>
<dbReference type="PANTHER" id="PTHR47317:SF1">
    <property type="entry name" value="PROTEIN LHCP TRANSLOCATION DEFECT"/>
    <property type="match status" value="1"/>
</dbReference>
<dbReference type="SUPFAM" id="SSF48403">
    <property type="entry name" value="Ankyrin repeat"/>
    <property type="match status" value="1"/>
</dbReference>
<dbReference type="PROSITE" id="PS50297">
    <property type="entry name" value="ANK_REP_REGION"/>
    <property type="match status" value="1"/>
</dbReference>
<evidence type="ECO:0000250" key="1"/>
<evidence type="ECO:0000255" key="2"/>
<evidence type="ECO:0000305" key="3"/>
<comment type="function">
    <text evidence="1">Involved in the import of light-harvesting complex proteins (LHCP) and subsequent routing of these proteins to the chloroplast signal recognition particle (SRP) pathway.</text>
</comment>
<comment type="subcellular location">
    <subcellularLocation>
        <location evidence="3">Plastid</location>
        <location evidence="3">Chloroplast</location>
    </subcellularLocation>
</comment>
<comment type="sequence caution" evidence="3">
    <conflict type="erroneous gene model prediction">
        <sequence resource="EMBL-CDS" id="BAC79654"/>
    </conflict>
</comment>
<comment type="sequence caution" evidence="3">
    <conflict type="erroneous gene model prediction">
        <sequence resource="EMBL-CDS" id="BAD30420"/>
    </conflict>
</comment>
<comment type="sequence caution" evidence="3">
    <conflict type="erroneous gene model prediction">
        <sequence resource="EMBL-CDS" id="BAF21718"/>
    </conflict>
</comment>
<reference key="1">
    <citation type="journal article" date="2005" name="Nature">
        <title>The map-based sequence of the rice genome.</title>
        <authorList>
            <consortium name="International rice genome sequencing project (IRGSP)"/>
        </authorList>
    </citation>
    <scope>NUCLEOTIDE SEQUENCE [LARGE SCALE GENOMIC DNA]</scope>
    <source>
        <strain>cv. Nipponbare</strain>
    </source>
</reference>
<reference key="2">
    <citation type="journal article" date="2008" name="Nucleic Acids Res.">
        <title>The rice annotation project database (RAP-DB): 2008 update.</title>
        <authorList>
            <consortium name="The rice annotation project (RAP)"/>
        </authorList>
    </citation>
    <scope>GENOME REANNOTATION</scope>
    <source>
        <strain>cv. Nipponbare</strain>
    </source>
</reference>
<reference key="3">
    <citation type="journal article" date="2013" name="Rice">
        <title>Improvement of the Oryza sativa Nipponbare reference genome using next generation sequence and optical map data.</title>
        <authorList>
            <person name="Kawahara Y."/>
            <person name="de la Bastide M."/>
            <person name="Hamilton J.P."/>
            <person name="Kanamori H."/>
            <person name="McCombie W.R."/>
            <person name="Ouyang S."/>
            <person name="Schwartz D.C."/>
            <person name="Tanaka T."/>
            <person name="Wu J."/>
            <person name="Zhou S."/>
            <person name="Childs K.L."/>
            <person name="Davidson R.M."/>
            <person name="Lin H."/>
            <person name="Quesada-Ocampo L."/>
            <person name="Vaillancourt B."/>
            <person name="Sakai H."/>
            <person name="Lee S.S."/>
            <person name="Kim J."/>
            <person name="Numa H."/>
            <person name="Itoh T."/>
            <person name="Buell C.R."/>
            <person name="Matsumoto T."/>
        </authorList>
    </citation>
    <scope>GENOME REANNOTATION</scope>
    <source>
        <strain>cv. Nipponbare</strain>
    </source>
</reference>
<reference key="4">
    <citation type="journal article" date="2005" name="PLoS Biol.">
        <title>The genomes of Oryza sativa: a history of duplications.</title>
        <authorList>
            <person name="Yu J."/>
            <person name="Wang J."/>
            <person name="Lin W."/>
            <person name="Li S."/>
            <person name="Li H."/>
            <person name="Zhou J."/>
            <person name="Ni P."/>
            <person name="Dong W."/>
            <person name="Hu S."/>
            <person name="Zeng C."/>
            <person name="Zhang J."/>
            <person name="Zhang Y."/>
            <person name="Li R."/>
            <person name="Xu Z."/>
            <person name="Li S."/>
            <person name="Li X."/>
            <person name="Zheng H."/>
            <person name="Cong L."/>
            <person name="Lin L."/>
            <person name="Yin J."/>
            <person name="Geng J."/>
            <person name="Li G."/>
            <person name="Shi J."/>
            <person name="Liu J."/>
            <person name="Lv H."/>
            <person name="Li J."/>
            <person name="Wang J."/>
            <person name="Deng Y."/>
            <person name="Ran L."/>
            <person name="Shi X."/>
            <person name="Wang X."/>
            <person name="Wu Q."/>
            <person name="Li C."/>
            <person name="Ren X."/>
            <person name="Wang J."/>
            <person name="Wang X."/>
            <person name="Li D."/>
            <person name="Liu D."/>
            <person name="Zhang X."/>
            <person name="Ji Z."/>
            <person name="Zhao W."/>
            <person name="Sun Y."/>
            <person name="Zhang Z."/>
            <person name="Bao J."/>
            <person name="Han Y."/>
            <person name="Dong L."/>
            <person name="Ji J."/>
            <person name="Chen P."/>
            <person name="Wu S."/>
            <person name="Liu J."/>
            <person name="Xiao Y."/>
            <person name="Bu D."/>
            <person name="Tan J."/>
            <person name="Yang L."/>
            <person name="Ye C."/>
            <person name="Zhang J."/>
            <person name="Xu J."/>
            <person name="Zhou Y."/>
            <person name="Yu Y."/>
            <person name="Zhang B."/>
            <person name="Zhuang S."/>
            <person name="Wei H."/>
            <person name="Liu B."/>
            <person name="Lei M."/>
            <person name="Yu H."/>
            <person name="Li Y."/>
            <person name="Xu H."/>
            <person name="Wei S."/>
            <person name="He X."/>
            <person name="Fang L."/>
            <person name="Zhang Z."/>
            <person name="Zhang Y."/>
            <person name="Huang X."/>
            <person name="Su Z."/>
            <person name="Tong W."/>
            <person name="Li J."/>
            <person name="Tong Z."/>
            <person name="Li S."/>
            <person name="Ye J."/>
            <person name="Wang L."/>
            <person name="Fang L."/>
            <person name="Lei T."/>
            <person name="Chen C.-S."/>
            <person name="Chen H.-C."/>
            <person name="Xu Z."/>
            <person name="Li H."/>
            <person name="Huang H."/>
            <person name="Zhang F."/>
            <person name="Xu H."/>
            <person name="Li N."/>
            <person name="Zhao C."/>
            <person name="Li S."/>
            <person name="Dong L."/>
            <person name="Huang Y."/>
            <person name="Li L."/>
            <person name="Xi Y."/>
            <person name="Qi Q."/>
            <person name="Li W."/>
            <person name="Zhang B."/>
            <person name="Hu W."/>
            <person name="Zhang Y."/>
            <person name="Tian X."/>
            <person name="Jiao Y."/>
            <person name="Liang X."/>
            <person name="Jin J."/>
            <person name="Gao L."/>
            <person name="Zheng W."/>
            <person name="Hao B."/>
            <person name="Liu S.-M."/>
            <person name="Wang W."/>
            <person name="Yuan L."/>
            <person name="Cao M."/>
            <person name="McDermott J."/>
            <person name="Samudrala R."/>
            <person name="Wang J."/>
            <person name="Wong G.K.-S."/>
            <person name="Yang H."/>
        </authorList>
    </citation>
    <scope>NUCLEOTIDE SEQUENCE [LARGE SCALE GENOMIC DNA]</scope>
    <source>
        <strain>cv. Nipponbare</strain>
    </source>
</reference>
<reference key="5">
    <citation type="journal article" date="2003" name="Science">
        <title>Collection, mapping, and annotation of over 28,000 cDNA clones from japonica rice.</title>
        <authorList>
            <consortium name="The rice full-length cDNA consortium"/>
        </authorList>
    </citation>
    <scope>NUCLEOTIDE SEQUENCE [LARGE SCALE MRNA] OF 8-172</scope>
    <source>
        <strain>cv. Nipponbare</strain>
    </source>
</reference>